<organism>
    <name type="scientific">Mus musculus</name>
    <name type="common">Mouse</name>
    <dbReference type="NCBI Taxonomy" id="10090"/>
    <lineage>
        <taxon>Eukaryota</taxon>
        <taxon>Metazoa</taxon>
        <taxon>Chordata</taxon>
        <taxon>Craniata</taxon>
        <taxon>Vertebrata</taxon>
        <taxon>Euteleostomi</taxon>
        <taxon>Mammalia</taxon>
        <taxon>Eutheria</taxon>
        <taxon>Euarchontoglires</taxon>
        <taxon>Glires</taxon>
        <taxon>Rodentia</taxon>
        <taxon>Myomorpha</taxon>
        <taxon>Muroidea</taxon>
        <taxon>Muridae</taxon>
        <taxon>Murinae</taxon>
        <taxon>Mus</taxon>
        <taxon>Mus</taxon>
    </lineage>
</organism>
<proteinExistence type="evidence at protein level"/>
<sequence>MECPAPDATDAADPGEAGPYKGSEEPEGREPDGVRFDRERARRLWEAVSGAQPAGREEVEHMIQKNQCLFTSTQCKVCCAMLISESQKLAHYQSKKHANKVKRYLAIHGMETIKGDVKRLDSDQKSSRSKDKNHCCPICNMTFSSPAVAQSHYLGKTHAKSLKLKQQSTKGAALQQNREMLDPDKFCSLCHSTFNDPAMAQQHYMGKRHRKQETKLKLMAHYGRLADPAVSDLPAGKGYPCKTCKIVLNSIEQYQAHVSGFKHKNQSPKTLVTLGSQTPVQTQPTPKDSSTVQD</sequence>
<name>ZN346_MOUSE</name>
<evidence type="ECO:0000250" key="1"/>
<evidence type="ECO:0000250" key="2">
    <source>
        <dbReference type="UniProtKB" id="Q9UL40"/>
    </source>
</evidence>
<evidence type="ECO:0000256" key="3">
    <source>
        <dbReference type="SAM" id="MobiDB-lite"/>
    </source>
</evidence>
<evidence type="ECO:0000269" key="4">
    <source>
    </source>
</evidence>
<reference key="1">
    <citation type="journal article" date="1999" name="J. Biol. Chem.">
        <title>JAZ requires the double-stranded RNA-binding zinc finger motifs for nuclear localization.</title>
        <authorList>
            <person name="Yang M."/>
            <person name="May W.S."/>
            <person name="Ito T."/>
        </authorList>
    </citation>
    <scope>NUCLEOTIDE SEQUENCE [MRNA]</scope>
    <scope>FUNCTION</scope>
    <scope>SUBCELLULAR LOCATION</scope>
    <scope>TISSUE SPECIFICITY</scope>
    <scope>MUTAGENESIS OF HIS-91; HIS-152; HIS-203 AND HIS-257</scope>
</reference>
<reference key="2">
    <citation type="journal article" date="2004" name="Genome Res.">
        <title>The status, quality, and expansion of the NIH full-length cDNA project: the Mammalian Gene Collection (MGC).</title>
        <authorList>
            <consortium name="The MGC Project Team"/>
        </authorList>
    </citation>
    <scope>NUCLEOTIDE SEQUENCE [LARGE SCALE MRNA]</scope>
    <source>
        <strain>C3H/He</strain>
        <tissue>Osteoblast</tissue>
    </source>
</reference>
<feature type="chain" id="PRO_0000191810" description="Zinc finger protein 346">
    <location>
        <begin position="1"/>
        <end position="294"/>
    </location>
</feature>
<feature type="zinc finger region" description="Matrin-type 1">
    <location>
        <begin position="70"/>
        <end position="104"/>
    </location>
</feature>
<feature type="zinc finger region" description="Matrin-type 2">
    <location>
        <begin position="131"/>
        <end position="165"/>
    </location>
</feature>
<feature type="zinc finger region" description="Matrin-type 3">
    <location>
        <begin position="182"/>
        <end position="216"/>
    </location>
</feature>
<feature type="zinc finger region" description="Matrin-type 4">
    <location>
        <begin position="236"/>
        <end position="270"/>
    </location>
</feature>
<feature type="region of interest" description="Disordered" evidence="3">
    <location>
        <begin position="1"/>
        <end position="35"/>
    </location>
</feature>
<feature type="region of interest" description="Disordered" evidence="3">
    <location>
        <begin position="269"/>
        <end position="294"/>
    </location>
</feature>
<feature type="compositionally biased region" description="Low complexity" evidence="3">
    <location>
        <begin position="1"/>
        <end position="19"/>
    </location>
</feature>
<feature type="compositionally biased region" description="Basic and acidic residues" evidence="3">
    <location>
        <begin position="22"/>
        <end position="35"/>
    </location>
</feature>
<feature type="binding site" evidence="1">
    <location>
        <position position="75"/>
    </location>
    <ligand>
        <name>Zn(2+)</name>
        <dbReference type="ChEBI" id="CHEBI:29105"/>
        <label>1</label>
    </ligand>
</feature>
<feature type="binding site" evidence="1">
    <location>
        <position position="78"/>
    </location>
    <ligand>
        <name>Zn(2+)</name>
        <dbReference type="ChEBI" id="CHEBI:29105"/>
        <label>1</label>
    </ligand>
</feature>
<feature type="binding site" evidence="1">
    <location>
        <position position="91"/>
    </location>
    <ligand>
        <name>Zn(2+)</name>
        <dbReference type="ChEBI" id="CHEBI:29105"/>
        <label>1</label>
    </ligand>
</feature>
<feature type="binding site" evidence="1">
    <location>
        <position position="97"/>
    </location>
    <ligand>
        <name>Zn(2+)</name>
        <dbReference type="ChEBI" id="CHEBI:29105"/>
        <label>1</label>
    </ligand>
</feature>
<feature type="binding site" evidence="1">
    <location>
        <position position="136"/>
    </location>
    <ligand>
        <name>Zn(2+)</name>
        <dbReference type="ChEBI" id="CHEBI:29105"/>
        <label>2</label>
    </ligand>
</feature>
<feature type="binding site" evidence="1">
    <location>
        <position position="139"/>
    </location>
    <ligand>
        <name>Zn(2+)</name>
        <dbReference type="ChEBI" id="CHEBI:29105"/>
        <label>2</label>
    </ligand>
</feature>
<feature type="binding site" evidence="1">
    <location>
        <position position="152"/>
    </location>
    <ligand>
        <name>Zn(2+)</name>
        <dbReference type="ChEBI" id="CHEBI:29105"/>
        <label>2</label>
    </ligand>
</feature>
<feature type="binding site" evidence="1">
    <location>
        <position position="158"/>
    </location>
    <ligand>
        <name>Zn(2+)</name>
        <dbReference type="ChEBI" id="CHEBI:29105"/>
        <label>2</label>
    </ligand>
</feature>
<feature type="modified residue" description="N-acetylmethionine" evidence="2">
    <location>
        <position position="1"/>
    </location>
</feature>
<feature type="cross-link" description="Glycyl lysine isopeptide (Lys-Gly) (interchain with G-Cter in SUMO2)" evidence="2">
    <location>
        <position position="114"/>
    </location>
</feature>
<feature type="cross-link" description="Glycyl lysine isopeptide (Lys-Gly) (interchain with G-Cter in SUMO2)" evidence="2">
    <location>
        <position position="170"/>
    </location>
</feature>
<feature type="mutagenesis site" description="No loss of dsRNA binding capacity. Binding capacity was reduced 40-60%; when associated with A-203. Binding capacity was reduced to 5-10%; when associated with A-152 and A-203. Loss of binding capacity; when associated with A-152; A-203 and A-257." evidence="4">
    <original>H</original>
    <variation>A</variation>
    <location>
        <position position="91"/>
    </location>
</feature>
<feature type="mutagenesis site" description="No loss of dsRNA binding capacity. Loss of 40-60% dsRNA binding; when associated with A-203. Binding capacity was reduced to 5-10%; when associated with A-91 and A-203. Loss of binding capacity; when associated with A-91; A-203 and A-257." evidence="4">
    <original>H</original>
    <variation>A</variation>
    <location>
        <position position="152"/>
    </location>
</feature>
<feature type="mutagenesis site" description="No loss of dsRNA binding capacity. Binding capacity was reduced 40-60%; when associated with A-91. Binding capacity was reduced to 5-10%; when associated with A-91 and A-152. Loss of binding capacity; when associated with A-91; A-152 and A-257." evidence="4">
    <original>H</original>
    <variation>A</variation>
    <location>
        <position position="203"/>
    </location>
</feature>
<feature type="mutagenesis site" description="No loss of dsRNA binding capacity. Loss of 5-10 % dsRNA binding capacity; when associated with A-152 and A-203. Loss of binding capacity; when associated with A-91; A-152 and A-203." evidence="4">
    <original>H</original>
    <variation>A</variation>
    <location>
        <position position="257"/>
    </location>
</feature>
<gene>
    <name type="primary">Znf346</name>
    <name type="synonym">Jaz</name>
    <name type="synonym">Zfp346</name>
</gene>
<dbReference type="EMBL" id="AF083339">
    <property type="protein sequence ID" value="AAD52017.1"/>
    <property type="molecule type" value="mRNA"/>
</dbReference>
<dbReference type="EMBL" id="BC055075">
    <property type="protein sequence ID" value="AAH55075.1"/>
    <property type="molecule type" value="mRNA"/>
</dbReference>
<dbReference type="CCDS" id="CCDS26539.1"/>
<dbReference type="RefSeq" id="NP_036147.1">
    <property type="nucleotide sequence ID" value="NM_012017.2"/>
</dbReference>
<dbReference type="SMR" id="Q9R0B7"/>
<dbReference type="BioGRID" id="205063">
    <property type="interactions" value="2"/>
</dbReference>
<dbReference type="FunCoup" id="Q9R0B7">
    <property type="interactions" value="2699"/>
</dbReference>
<dbReference type="STRING" id="10090.ENSMUSP00000021937"/>
<dbReference type="iPTMnet" id="Q9R0B7"/>
<dbReference type="PhosphoSitePlus" id="Q9R0B7"/>
<dbReference type="SwissPalm" id="Q9R0B7"/>
<dbReference type="PaxDb" id="10090-ENSMUSP00000021937"/>
<dbReference type="ProteomicsDB" id="275284"/>
<dbReference type="Pumba" id="Q9R0B7"/>
<dbReference type="Antibodypedia" id="17273">
    <property type="antibodies" value="300 antibodies from 32 providers"/>
</dbReference>
<dbReference type="DNASU" id="26919"/>
<dbReference type="Ensembl" id="ENSMUST00000021937.12">
    <property type="protein sequence ID" value="ENSMUSP00000021937.6"/>
    <property type="gene ID" value="ENSMUSG00000021481.12"/>
</dbReference>
<dbReference type="GeneID" id="26919"/>
<dbReference type="KEGG" id="mmu:26919"/>
<dbReference type="UCSC" id="uc007qpy.1">
    <property type="organism name" value="mouse"/>
</dbReference>
<dbReference type="AGR" id="MGI:1349417"/>
<dbReference type="CTD" id="26919"/>
<dbReference type="MGI" id="MGI:1349417">
    <property type="gene designation" value="Zfp346"/>
</dbReference>
<dbReference type="VEuPathDB" id="HostDB:ENSMUSG00000021481"/>
<dbReference type="eggNOG" id="ENOG502RVNK">
    <property type="taxonomic scope" value="Eukaryota"/>
</dbReference>
<dbReference type="GeneTree" id="ENSGT00940000159101"/>
<dbReference type="InParanoid" id="Q9R0B7"/>
<dbReference type="OrthoDB" id="1925236at2759"/>
<dbReference type="PhylomeDB" id="Q9R0B7"/>
<dbReference type="TreeFam" id="TF350019"/>
<dbReference type="BioGRID-ORCS" id="26919">
    <property type="hits" value="0 hits in 79 CRISPR screens"/>
</dbReference>
<dbReference type="ChiTaRS" id="Zfp346">
    <property type="organism name" value="mouse"/>
</dbReference>
<dbReference type="PRO" id="PR:Q9R0B7"/>
<dbReference type="Proteomes" id="UP000000589">
    <property type="component" value="Chromosome 13"/>
</dbReference>
<dbReference type="RNAct" id="Q9R0B7">
    <property type="molecule type" value="protein"/>
</dbReference>
<dbReference type="Bgee" id="ENSMUSG00000021481">
    <property type="expression patterns" value="Expressed in embryonic post-anal tail and 264 other cell types or tissues"/>
</dbReference>
<dbReference type="ExpressionAtlas" id="Q9R0B7">
    <property type="expression patterns" value="baseline and differential"/>
</dbReference>
<dbReference type="GO" id="GO:0005737">
    <property type="term" value="C:cytoplasm"/>
    <property type="evidence" value="ECO:0007669"/>
    <property type="project" value="UniProtKB-SubCell"/>
</dbReference>
<dbReference type="GO" id="GO:0005730">
    <property type="term" value="C:nucleolus"/>
    <property type="evidence" value="ECO:0000314"/>
    <property type="project" value="MGI"/>
</dbReference>
<dbReference type="GO" id="GO:0005634">
    <property type="term" value="C:nucleus"/>
    <property type="evidence" value="ECO:0000250"/>
    <property type="project" value="UniProtKB"/>
</dbReference>
<dbReference type="GO" id="GO:0003725">
    <property type="term" value="F:double-stranded RNA binding"/>
    <property type="evidence" value="ECO:0000314"/>
    <property type="project" value="MGI"/>
</dbReference>
<dbReference type="GO" id="GO:0035198">
    <property type="term" value="F:miRNA binding"/>
    <property type="evidence" value="ECO:0000250"/>
    <property type="project" value="UniProtKB"/>
</dbReference>
<dbReference type="GO" id="GO:0008270">
    <property type="term" value="F:zinc ion binding"/>
    <property type="evidence" value="ECO:0007669"/>
    <property type="project" value="UniProtKB-KW"/>
</dbReference>
<dbReference type="GO" id="GO:0043065">
    <property type="term" value="P:positive regulation of apoptotic process"/>
    <property type="evidence" value="ECO:0000315"/>
    <property type="project" value="MGI"/>
</dbReference>
<dbReference type="FunFam" id="3.30.160.60:FF:000581">
    <property type="entry name" value="zinc finger protein 346 isoform X1"/>
    <property type="match status" value="1"/>
</dbReference>
<dbReference type="FunFam" id="3.30.160.60:FF:000668">
    <property type="entry name" value="zinc finger protein 346 isoform X1"/>
    <property type="match status" value="1"/>
</dbReference>
<dbReference type="FunFam" id="3.30.160.60:FF:000700">
    <property type="entry name" value="zinc finger protein 346 isoform X1"/>
    <property type="match status" value="1"/>
</dbReference>
<dbReference type="FunFam" id="3.30.160.60:FF:000722">
    <property type="entry name" value="zinc finger protein 346 isoform X1"/>
    <property type="match status" value="1"/>
</dbReference>
<dbReference type="Gene3D" id="3.30.160.60">
    <property type="entry name" value="Classic Zinc Finger"/>
    <property type="match status" value="4"/>
</dbReference>
<dbReference type="InterPro" id="IPR003604">
    <property type="entry name" value="Matrin/U1-like-C_Znf_C2H2"/>
</dbReference>
<dbReference type="InterPro" id="IPR051868">
    <property type="entry name" value="ZN346_ZMAT4"/>
</dbReference>
<dbReference type="InterPro" id="IPR036236">
    <property type="entry name" value="Znf_C2H2_sf"/>
</dbReference>
<dbReference type="InterPro" id="IPR013087">
    <property type="entry name" value="Znf_C2H2_type"/>
</dbReference>
<dbReference type="PANTHER" id="PTHR46144:SF5">
    <property type="entry name" value="ZINC FINGER PROTEIN 346"/>
    <property type="match status" value="1"/>
</dbReference>
<dbReference type="PANTHER" id="PTHR46144">
    <property type="entry name" value="ZINC FINGER PROTEIN 385B-LIKE"/>
    <property type="match status" value="1"/>
</dbReference>
<dbReference type="Pfam" id="PF12874">
    <property type="entry name" value="zf-met"/>
    <property type="match status" value="4"/>
</dbReference>
<dbReference type="SMART" id="SM00355">
    <property type="entry name" value="ZnF_C2H2"/>
    <property type="match status" value="4"/>
</dbReference>
<dbReference type="SMART" id="SM00451">
    <property type="entry name" value="ZnF_U1"/>
    <property type="match status" value="4"/>
</dbReference>
<dbReference type="SUPFAM" id="SSF57667">
    <property type="entry name" value="beta-beta-alpha zinc fingers"/>
    <property type="match status" value="4"/>
</dbReference>
<comment type="function">
    <text evidence="1 2 4">Binds with low affinity to dsDNA and ssRNA, and with high affinity to dsRNA, with no detectable sequence specificity (By similarity) (PubMed:10488071). May bind to specific miRNA hairpins (By similarity).</text>
</comment>
<comment type="subunit">
    <text evidence="1">Forms a heteromeric complex with XPO5 and ILF3. Found in a nuclear export complex with XPO5, RAN, ILF3, ZNF346 and double-stranded RNA. Interacts with XPO5. Interacts with ILF3 in an RNA-independent manner (By similarity).</text>
</comment>
<comment type="subcellular location">
    <subcellularLocation>
        <location evidence="1">Nucleus</location>
        <location evidence="1">Nucleolus</location>
    </subcellularLocation>
    <subcellularLocation>
        <location evidence="1">Cytoplasm</location>
    </subcellularLocation>
    <text evidence="1">Nuclear at steady state, primarily in the nucleolus. Shuttles between the nucleus and cytoplasm when associated with XPO5 (By similarity).</text>
</comment>
<comment type="tissue specificity">
    <text evidence="4">Expressed in all tissues tested, including heart, brain, spleen, lung, liver, muscle, kidney and testis. Exogenous expression induced apoptosis.</text>
</comment>
<comment type="domain">
    <text>The zinc-finger domains are required for binding to dsRNA, and also for nuclear localization.</text>
</comment>
<keyword id="KW-0007">Acetylation</keyword>
<keyword id="KW-0963">Cytoplasm</keyword>
<keyword id="KW-1017">Isopeptide bond</keyword>
<keyword id="KW-0479">Metal-binding</keyword>
<keyword id="KW-0539">Nucleus</keyword>
<keyword id="KW-1185">Reference proteome</keyword>
<keyword id="KW-0677">Repeat</keyword>
<keyword id="KW-0694">RNA-binding</keyword>
<keyword id="KW-0832">Ubl conjugation</keyword>
<keyword id="KW-0862">Zinc</keyword>
<keyword id="KW-0863">Zinc-finger</keyword>
<accession>Q9R0B7</accession>
<protein>
    <recommendedName>
        <fullName>Zinc finger protein 346</fullName>
    </recommendedName>
    <alternativeName>
        <fullName>Just another zinc finger protein</fullName>
    </alternativeName>
</protein>